<reference key="1">
    <citation type="journal article" date="2004" name="Genome Res.">
        <title>The status, quality, and expansion of the NIH full-length cDNA project: the Mammalian Gene Collection (MGC).</title>
        <authorList>
            <consortium name="The MGC Project Team"/>
        </authorList>
    </citation>
    <scope>NUCLEOTIDE SEQUENCE [LARGE SCALE MRNA]</scope>
    <source>
        <strain>FVB/N</strain>
        <tissue>Colon</tissue>
    </source>
</reference>
<reference key="2">
    <citation type="journal article" date="2010" name="Cell">
        <title>A tissue-specific atlas of mouse protein phosphorylation and expression.</title>
        <authorList>
            <person name="Huttlin E.L."/>
            <person name="Jedrychowski M.P."/>
            <person name="Elias J.E."/>
            <person name="Goswami T."/>
            <person name="Rad R."/>
            <person name="Beausoleil S.A."/>
            <person name="Villen J."/>
            <person name="Haas W."/>
            <person name="Sowa M.E."/>
            <person name="Gygi S.P."/>
        </authorList>
    </citation>
    <scope>IDENTIFICATION BY MASS SPECTROMETRY [LARGE SCALE ANALYSIS]</scope>
    <source>
        <tissue>Brain</tissue>
    </source>
</reference>
<name>UB2D1_MOUSE</name>
<comment type="function">
    <text evidence="1">Accepts ubiquitin from the E1 complex and catalyzes its covalent attachment to other proteins. In vitro catalyzes 'Lys-48'-linked polyubiquitination. Mediates the selective degradation of short-lived and abnormal proteins. Functions in the E6/E6-AP-induced ubiquitination of p53/TP53. Mediates ubiquitination of PEX5 and auto-ubiquitination of STUB1, TRAF6 and TRIM63/MURF1. Ubiquitinates STUB1-associated HSP90AB1 in vitro. Lacks inherent specificity for any particular lysine residue of ubiquitin. Essential for viral activation of IRF3. Mediates polyubiquitination of CYP3A4.</text>
</comment>
<comment type="catalytic activity">
    <reaction evidence="1 2 3">
        <text>S-ubiquitinyl-[E1 ubiquitin-activating enzyme]-L-cysteine + [E2 ubiquitin-conjugating enzyme]-L-cysteine = [E1 ubiquitin-activating enzyme]-L-cysteine + S-ubiquitinyl-[E2 ubiquitin-conjugating enzyme]-L-cysteine.</text>
        <dbReference type="EC" id="2.3.2.23"/>
    </reaction>
</comment>
<comment type="catalytic activity">
    <reaction evidence="1">
        <text>S-ubiquitinyl-[E1 ubiquitin-activating enzyme]-L-cysteine + [acceptor protein]-L-lysine = [E1 ubiquitin-activating enzyme]-L-cysteine + N(6)-monoubiquitinyl-[acceptor protein]-L-lysine.</text>
        <dbReference type="EC" id="2.3.2.24"/>
    </reaction>
</comment>
<comment type="pathway">
    <text evidence="2">Protein modification; protein ubiquitination.</text>
</comment>
<comment type="subunit">
    <text evidence="1">Component of a E3 ubiquitin ligase complex containing UBE2D1, SIAH1, CACYBP/SIP, SKP1, APC and TBL1X. Interacts with RNF11.</text>
</comment>
<comment type="subcellular location">
    <subcellularLocation>
        <location evidence="1">Cytoplasm</location>
    </subcellularLocation>
</comment>
<comment type="PTM">
    <text evidence="1">Autoubiquitinated.</text>
</comment>
<comment type="similarity">
    <text evidence="2">Belongs to the ubiquitin-conjugating enzyme family.</text>
</comment>
<evidence type="ECO:0000250" key="1">
    <source>
        <dbReference type="UniProtKB" id="P51668"/>
    </source>
</evidence>
<evidence type="ECO:0000255" key="2">
    <source>
        <dbReference type="PROSITE-ProRule" id="PRU00388"/>
    </source>
</evidence>
<evidence type="ECO:0000255" key="3">
    <source>
        <dbReference type="PROSITE-ProRule" id="PRU10133"/>
    </source>
</evidence>
<sequence>MALKRIQKELSDLQRDPPAHCSAGPVGDDLFHWQATIMGPPDSAYQGGVFFLTVHFPTDYPFKPPKIAFTTKIYHPNINSNGSICLDILRSQWSPALTVSKVLLSICSLLCDPNPDDPLVPDIAQIYKSDKEKYNRHAREWTQKYAM</sequence>
<feature type="chain" id="PRO_0000082461" description="Ubiquitin-conjugating enzyme E2 D1">
    <location>
        <begin position="1"/>
        <end position="147"/>
    </location>
</feature>
<feature type="domain" description="UBC core" evidence="2">
    <location>
        <begin position="1"/>
        <end position="147"/>
    </location>
</feature>
<feature type="active site" description="Glycyl thioester intermediate" evidence="2 3">
    <location>
        <position position="85"/>
    </location>
</feature>
<keyword id="KW-0067">ATP-binding</keyword>
<keyword id="KW-0963">Cytoplasm</keyword>
<keyword id="KW-0547">Nucleotide-binding</keyword>
<keyword id="KW-1185">Reference proteome</keyword>
<keyword id="KW-0808">Transferase</keyword>
<keyword id="KW-0832">Ubl conjugation</keyword>
<keyword id="KW-0833">Ubl conjugation pathway</keyword>
<protein>
    <recommendedName>
        <fullName>Ubiquitin-conjugating enzyme E2 D1</fullName>
        <ecNumber>2.3.2.23</ecNumber>
    </recommendedName>
    <alternativeName>
        <fullName>(E3-independent) E2 ubiquitin-conjugating enzyme D1</fullName>
        <ecNumber>2.3.2.24</ecNumber>
    </alternativeName>
    <alternativeName>
        <fullName>E2 ubiquitin-conjugating enzyme D1</fullName>
    </alternativeName>
    <alternativeName>
        <fullName>Ubiquitin carrier protein D1</fullName>
    </alternativeName>
    <alternativeName>
        <fullName>Ubiquitin-conjugating enzyme E2(17)KB 1</fullName>
    </alternativeName>
    <alternativeName>
        <fullName>Ubiquitin-conjugating enzyme E2-17 kDa 1</fullName>
    </alternativeName>
    <alternativeName>
        <fullName>Ubiquitin-protein ligase D1</fullName>
    </alternativeName>
</protein>
<gene>
    <name type="primary">Ube2d1</name>
</gene>
<organism>
    <name type="scientific">Mus musculus</name>
    <name type="common">Mouse</name>
    <dbReference type="NCBI Taxonomy" id="10090"/>
    <lineage>
        <taxon>Eukaryota</taxon>
        <taxon>Metazoa</taxon>
        <taxon>Chordata</taxon>
        <taxon>Craniata</taxon>
        <taxon>Vertebrata</taxon>
        <taxon>Euteleostomi</taxon>
        <taxon>Mammalia</taxon>
        <taxon>Eutheria</taxon>
        <taxon>Euarchontoglires</taxon>
        <taxon>Glires</taxon>
        <taxon>Rodentia</taxon>
        <taxon>Myomorpha</taxon>
        <taxon>Muroidea</taxon>
        <taxon>Muridae</taxon>
        <taxon>Murinae</taxon>
        <taxon>Mus</taxon>
        <taxon>Mus</taxon>
    </lineage>
</organism>
<proteinExistence type="evidence at protein level"/>
<dbReference type="EC" id="2.3.2.23"/>
<dbReference type="EC" id="2.3.2.24"/>
<dbReference type="EMBL" id="BC019464">
    <property type="protein sequence ID" value="AAH19464.1"/>
    <property type="molecule type" value="mRNA"/>
</dbReference>
<dbReference type="CCDS" id="CCDS35933.1"/>
<dbReference type="RefSeq" id="NP_663395.1">
    <property type="nucleotide sequence ID" value="NM_145420.3"/>
</dbReference>
<dbReference type="BMRB" id="P61080"/>
<dbReference type="SMR" id="P61080"/>
<dbReference type="BioGRID" id="229694">
    <property type="interactions" value="12"/>
</dbReference>
<dbReference type="FunCoup" id="P61080">
    <property type="interactions" value="1101"/>
</dbReference>
<dbReference type="STRING" id="10090.ENSMUSP00000020085"/>
<dbReference type="iPTMnet" id="P61080"/>
<dbReference type="PhosphoSitePlus" id="P61080"/>
<dbReference type="SwissPalm" id="P61080"/>
<dbReference type="jPOST" id="P61080"/>
<dbReference type="PaxDb" id="10090-ENSMUSP00000020085"/>
<dbReference type="PeptideAtlas" id="P61080"/>
<dbReference type="ProteomicsDB" id="298171"/>
<dbReference type="Pumba" id="P61080"/>
<dbReference type="Antibodypedia" id="14190">
    <property type="antibodies" value="292 antibodies from 33 providers"/>
</dbReference>
<dbReference type="DNASU" id="216080"/>
<dbReference type="Ensembl" id="ENSMUST00000020085.7">
    <property type="protein sequence ID" value="ENSMUSP00000020085.7"/>
    <property type="gene ID" value="ENSMUSG00000019927.7"/>
</dbReference>
<dbReference type="GeneID" id="216080"/>
<dbReference type="KEGG" id="mmu:216080"/>
<dbReference type="UCSC" id="uc007foo.2">
    <property type="organism name" value="mouse"/>
</dbReference>
<dbReference type="AGR" id="MGI:2384911"/>
<dbReference type="CTD" id="7321"/>
<dbReference type="MGI" id="MGI:2384911">
    <property type="gene designation" value="Ube2d1"/>
</dbReference>
<dbReference type="VEuPathDB" id="HostDB:ENSMUSG00000019927"/>
<dbReference type="eggNOG" id="KOG0417">
    <property type="taxonomic scope" value="Eukaryota"/>
</dbReference>
<dbReference type="GeneTree" id="ENSGT00940000155109"/>
<dbReference type="HOGENOM" id="CLU_030988_13_3_1"/>
<dbReference type="InParanoid" id="P61080"/>
<dbReference type="OMA" id="NFHWQAT"/>
<dbReference type="OrthoDB" id="7851174at2759"/>
<dbReference type="PhylomeDB" id="P61080"/>
<dbReference type="TreeFam" id="TF101108"/>
<dbReference type="Reactome" id="R-MMU-1234176">
    <property type="pathway name" value="Oxygen-dependent proline hydroxylation of Hypoxia-inducible Factor Alpha"/>
</dbReference>
<dbReference type="Reactome" id="R-MMU-141430">
    <property type="pathway name" value="Inactivation of APC/C via direct inhibition of the APC/C complex"/>
</dbReference>
<dbReference type="Reactome" id="R-MMU-174048">
    <property type="pathway name" value="APC/C:Cdc20 mediated degradation of Cyclin B"/>
</dbReference>
<dbReference type="Reactome" id="R-MMU-174084">
    <property type="pathway name" value="Autodegradation of Cdh1 by Cdh1:APC/C"/>
</dbReference>
<dbReference type="Reactome" id="R-MMU-174154">
    <property type="pathway name" value="APC/C:Cdc20 mediated degradation of Securin"/>
</dbReference>
<dbReference type="Reactome" id="R-MMU-174178">
    <property type="pathway name" value="APC/C:Cdh1 mediated degradation of Cdc20 and other APC/C:Cdh1 targeted proteins in late mitosis/early G1"/>
</dbReference>
<dbReference type="Reactome" id="R-MMU-174184">
    <property type="pathway name" value="Cdc20:Phospho-APC/C mediated degradation of Cyclin A"/>
</dbReference>
<dbReference type="Reactome" id="R-MMU-176407">
    <property type="pathway name" value="Conversion from APC/C:Cdc20 to APC/C:Cdh1 in late anaphase"/>
</dbReference>
<dbReference type="Reactome" id="R-MMU-176408">
    <property type="pathway name" value="Regulation of APC/C activators between G1/S and early anaphase"/>
</dbReference>
<dbReference type="Reactome" id="R-MMU-176409">
    <property type="pathway name" value="APC/C:Cdc20 mediated degradation of mitotic proteins"/>
</dbReference>
<dbReference type="Reactome" id="R-MMU-176412">
    <property type="pathway name" value="Phosphorylation of the APC/C"/>
</dbReference>
<dbReference type="Reactome" id="R-MMU-179409">
    <property type="pathway name" value="APC-Cdc20 mediated degradation of Nek2A"/>
</dbReference>
<dbReference type="Reactome" id="R-MMU-201451">
    <property type="pathway name" value="Signaling by BMP"/>
</dbReference>
<dbReference type="Reactome" id="R-MMU-202424">
    <property type="pathway name" value="Downstream TCR signaling"/>
</dbReference>
<dbReference type="Reactome" id="R-MMU-2173795">
    <property type="pathway name" value="Downregulation of SMAD2/3:SMAD4 transcriptional activity"/>
</dbReference>
<dbReference type="Reactome" id="R-MMU-2467813">
    <property type="pathway name" value="Separation of Sister Chromatids"/>
</dbReference>
<dbReference type="Reactome" id="R-MMU-2559582">
    <property type="pathway name" value="Senescence-Associated Secretory Phenotype (SASP)"/>
</dbReference>
<dbReference type="Reactome" id="R-MMU-2871837">
    <property type="pathway name" value="FCERI mediated NF-kB activation"/>
</dbReference>
<dbReference type="Reactome" id="R-MMU-5357905">
    <property type="pathway name" value="Regulation of TNFR1 signaling"/>
</dbReference>
<dbReference type="Reactome" id="R-MMU-5607764">
    <property type="pathway name" value="CLEC7A (Dectin-1) signaling"/>
</dbReference>
<dbReference type="Reactome" id="R-MMU-5689896">
    <property type="pathway name" value="Ovarian tumor domain proteases"/>
</dbReference>
<dbReference type="Reactome" id="R-MMU-68867">
    <property type="pathway name" value="Assembly of the pre-replicative complex"/>
</dbReference>
<dbReference type="Reactome" id="R-MMU-69017">
    <property type="pathway name" value="CDK-mediated phosphorylation and removal of Cdc6"/>
</dbReference>
<dbReference type="Reactome" id="R-MMU-8866652">
    <property type="pathway name" value="Synthesis of active ubiquitin: roles of E1 and E2 enzymes"/>
</dbReference>
<dbReference type="Reactome" id="R-MMU-8866654">
    <property type="pathway name" value="E3 ubiquitin ligases ubiquitinate target proteins"/>
</dbReference>
<dbReference type="Reactome" id="R-MMU-8951664">
    <property type="pathway name" value="Neddylation"/>
</dbReference>
<dbReference type="Reactome" id="R-MMU-9033241">
    <property type="pathway name" value="Peroxisomal protein import"/>
</dbReference>
<dbReference type="Reactome" id="R-MMU-937041">
    <property type="pathway name" value="IKK complex recruitment mediated by RIP1"/>
</dbReference>
<dbReference type="Reactome" id="R-MMU-9705462">
    <property type="pathway name" value="Inactivation of CSF3 (G-CSF) signaling"/>
</dbReference>
<dbReference type="Reactome" id="R-MMU-983168">
    <property type="pathway name" value="Antigen processing: Ubiquitination &amp; Proteasome degradation"/>
</dbReference>
<dbReference type="UniPathway" id="UPA00143"/>
<dbReference type="BioGRID-ORCS" id="216080">
    <property type="hits" value="1 hit in 79 CRISPR screens"/>
</dbReference>
<dbReference type="ChiTaRS" id="Ube2d1">
    <property type="organism name" value="mouse"/>
</dbReference>
<dbReference type="PRO" id="PR:P61080"/>
<dbReference type="Proteomes" id="UP000000589">
    <property type="component" value="Chromosome 10"/>
</dbReference>
<dbReference type="RNAct" id="P61080">
    <property type="molecule type" value="protein"/>
</dbReference>
<dbReference type="Bgee" id="ENSMUSG00000019927">
    <property type="expression patterns" value="Expressed in interventricular septum and 250 other cell types or tissues"/>
</dbReference>
<dbReference type="ExpressionAtlas" id="P61080">
    <property type="expression patterns" value="baseline and differential"/>
</dbReference>
<dbReference type="GO" id="GO:0005737">
    <property type="term" value="C:cytoplasm"/>
    <property type="evidence" value="ECO:0000250"/>
    <property type="project" value="UniProtKB"/>
</dbReference>
<dbReference type="GO" id="GO:0032991">
    <property type="term" value="C:protein-containing complex"/>
    <property type="evidence" value="ECO:0000266"/>
    <property type="project" value="MGI"/>
</dbReference>
<dbReference type="GO" id="GO:0005524">
    <property type="term" value="F:ATP binding"/>
    <property type="evidence" value="ECO:0007669"/>
    <property type="project" value="UniProtKB-KW"/>
</dbReference>
<dbReference type="GO" id="GO:0061631">
    <property type="term" value="F:ubiquitin conjugating enzyme activity"/>
    <property type="evidence" value="ECO:0000314"/>
    <property type="project" value="MGI"/>
</dbReference>
<dbReference type="GO" id="GO:0061630">
    <property type="term" value="F:ubiquitin protein ligase activity"/>
    <property type="evidence" value="ECO:0007669"/>
    <property type="project" value="Ensembl"/>
</dbReference>
<dbReference type="GO" id="GO:0004842">
    <property type="term" value="F:ubiquitin-protein transferase activity"/>
    <property type="evidence" value="ECO:0000250"/>
    <property type="project" value="UniProtKB"/>
</dbReference>
<dbReference type="GO" id="GO:1904262">
    <property type="term" value="P:negative regulation of TORC1 signaling"/>
    <property type="evidence" value="ECO:0007669"/>
    <property type="project" value="Ensembl"/>
</dbReference>
<dbReference type="GO" id="GO:1902916">
    <property type="term" value="P:positive regulation of protein polyubiquitination"/>
    <property type="evidence" value="ECO:0000316"/>
    <property type="project" value="MGI"/>
</dbReference>
<dbReference type="GO" id="GO:0031398">
    <property type="term" value="P:positive regulation of protein ubiquitination"/>
    <property type="evidence" value="ECO:0000250"/>
    <property type="project" value="UniProtKB"/>
</dbReference>
<dbReference type="GO" id="GO:0043161">
    <property type="term" value="P:proteasome-mediated ubiquitin-dependent protein catabolic process"/>
    <property type="evidence" value="ECO:0007669"/>
    <property type="project" value="Ensembl"/>
</dbReference>
<dbReference type="GO" id="GO:0070936">
    <property type="term" value="P:protein K48-linked ubiquitination"/>
    <property type="evidence" value="ECO:0007669"/>
    <property type="project" value="Ensembl"/>
</dbReference>
<dbReference type="GO" id="GO:0000209">
    <property type="term" value="P:protein polyubiquitination"/>
    <property type="evidence" value="ECO:0000314"/>
    <property type="project" value="MGI"/>
</dbReference>
<dbReference type="GO" id="GO:0006511">
    <property type="term" value="P:ubiquitin-dependent protein catabolic process"/>
    <property type="evidence" value="ECO:0000250"/>
    <property type="project" value="UniProtKB"/>
</dbReference>
<dbReference type="CDD" id="cd23792">
    <property type="entry name" value="UBCc_UBE2D"/>
    <property type="match status" value="1"/>
</dbReference>
<dbReference type="FunFam" id="3.10.110.10:FF:000101">
    <property type="entry name" value="Ubiquitin-conjugating enzyme E2 D2"/>
    <property type="match status" value="1"/>
</dbReference>
<dbReference type="Gene3D" id="3.10.110.10">
    <property type="entry name" value="Ubiquitin Conjugating Enzyme"/>
    <property type="match status" value="1"/>
</dbReference>
<dbReference type="InterPro" id="IPR000608">
    <property type="entry name" value="UBQ-conjugat_E2_core"/>
</dbReference>
<dbReference type="InterPro" id="IPR023313">
    <property type="entry name" value="UBQ-conjugating_AS"/>
</dbReference>
<dbReference type="InterPro" id="IPR016135">
    <property type="entry name" value="UBQ-conjugating_enzyme/RWD"/>
</dbReference>
<dbReference type="PANTHER" id="PTHR24068">
    <property type="entry name" value="UBIQUITIN-CONJUGATING ENZYME E2"/>
    <property type="match status" value="1"/>
</dbReference>
<dbReference type="Pfam" id="PF00179">
    <property type="entry name" value="UQ_con"/>
    <property type="match status" value="1"/>
</dbReference>
<dbReference type="SMART" id="SM00212">
    <property type="entry name" value="UBCc"/>
    <property type="match status" value="1"/>
</dbReference>
<dbReference type="SUPFAM" id="SSF54495">
    <property type="entry name" value="UBC-like"/>
    <property type="match status" value="1"/>
</dbReference>
<dbReference type="PROSITE" id="PS00183">
    <property type="entry name" value="UBC_1"/>
    <property type="match status" value="1"/>
</dbReference>
<dbReference type="PROSITE" id="PS50127">
    <property type="entry name" value="UBC_2"/>
    <property type="match status" value="1"/>
</dbReference>
<accession>P61080</accession>